<gene>
    <name evidence="1" type="primary">lipA</name>
    <name type="ordered locus">Shewmr7_1049</name>
</gene>
<name>LIPA_SHESR</name>
<organism>
    <name type="scientific">Shewanella sp. (strain MR-7)</name>
    <dbReference type="NCBI Taxonomy" id="60481"/>
    <lineage>
        <taxon>Bacteria</taxon>
        <taxon>Pseudomonadati</taxon>
        <taxon>Pseudomonadota</taxon>
        <taxon>Gammaproteobacteria</taxon>
        <taxon>Alteromonadales</taxon>
        <taxon>Shewanellaceae</taxon>
        <taxon>Shewanella</taxon>
    </lineage>
</organism>
<sequence>MNRPERLQPGVKLRDADKVSRIPVKIVPSERETMLRKPDWLRVKLPASNQRILEIKQALRSNGLHSVCEEASCPNLAECFNHGTATFMILGAICTRRCPFCDVAHGRPLKPDADEPVKLAQTIRDMKLKYVVITSVDRDDLRDGGAQHFADCIREIRKLNPEIKIEILVPDFRGRIDAALDILSTEPPDVFNHNLETAPMHYRKARPGANYQWSLDLLKRFKERHPNVPTKSGLMMGLGETNEEIAQVLRDLREHKVEMLTLGQYLQPSKFHLPVERYVSPAEFDELKVLADELGFTHAACGPLVRSSYHADLQAQGKEVK</sequence>
<keyword id="KW-0004">4Fe-4S</keyword>
<keyword id="KW-0963">Cytoplasm</keyword>
<keyword id="KW-0408">Iron</keyword>
<keyword id="KW-0411">Iron-sulfur</keyword>
<keyword id="KW-0479">Metal-binding</keyword>
<keyword id="KW-0949">S-adenosyl-L-methionine</keyword>
<keyword id="KW-0808">Transferase</keyword>
<accession>Q0HXV7</accession>
<dbReference type="EC" id="2.8.1.8" evidence="1"/>
<dbReference type="EMBL" id="CP000444">
    <property type="protein sequence ID" value="ABI42048.1"/>
    <property type="molecule type" value="Genomic_DNA"/>
</dbReference>
<dbReference type="SMR" id="Q0HXV7"/>
<dbReference type="KEGG" id="shm:Shewmr7_1049"/>
<dbReference type="HOGENOM" id="CLU_033144_2_1_6"/>
<dbReference type="UniPathway" id="UPA00538">
    <property type="reaction ID" value="UER00593"/>
</dbReference>
<dbReference type="GO" id="GO:0005737">
    <property type="term" value="C:cytoplasm"/>
    <property type="evidence" value="ECO:0007669"/>
    <property type="project" value="UniProtKB-SubCell"/>
</dbReference>
<dbReference type="GO" id="GO:0051539">
    <property type="term" value="F:4 iron, 4 sulfur cluster binding"/>
    <property type="evidence" value="ECO:0007669"/>
    <property type="project" value="UniProtKB-UniRule"/>
</dbReference>
<dbReference type="GO" id="GO:0016992">
    <property type="term" value="F:lipoate synthase activity"/>
    <property type="evidence" value="ECO:0007669"/>
    <property type="project" value="UniProtKB-UniRule"/>
</dbReference>
<dbReference type="GO" id="GO:0046872">
    <property type="term" value="F:metal ion binding"/>
    <property type="evidence" value="ECO:0007669"/>
    <property type="project" value="UniProtKB-KW"/>
</dbReference>
<dbReference type="CDD" id="cd01335">
    <property type="entry name" value="Radical_SAM"/>
    <property type="match status" value="1"/>
</dbReference>
<dbReference type="FunFam" id="3.20.20.70:FF:000023">
    <property type="entry name" value="Lipoyl synthase"/>
    <property type="match status" value="1"/>
</dbReference>
<dbReference type="Gene3D" id="3.20.20.70">
    <property type="entry name" value="Aldolase class I"/>
    <property type="match status" value="1"/>
</dbReference>
<dbReference type="HAMAP" id="MF_00206">
    <property type="entry name" value="Lipoyl_synth"/>
    <property type="match status" value="1"/>
</dbReference>
<dbReference type="InterPro" id="IPR013785">
    <property type="entry name" value="Aldolase_TIM"/>
</dbReference>
<dbReference type="InterPro" id="IPR006638">
    <property type="entry name" value="Elp3/MiaA/NifB-like_rSAM"/>
</dbReference>
<dbReference type="InterPro" id="IPR003698">
    <property type="entry name" value="Lipoyl_synth"/>
</dbReference>
<dbReference type="InterPro" id="IPR007197">
    <property type="entry name" value="rSAM"/>
</dbReference>
<dbReference type="NCBIfam" id="TIGR00510">
    <property type="entry name" value="lipA"/>
    <property type="match status" value="1"/>
</dbReference>
<dbReference type="NCBIfam" id="NF004019">
    <property type="entry name" value="PRK05481.1"/>
    <property type="match status" value="1"/>
</dbReference>
<dbReference type="NCBIfam" id="NF009544">
    <property type="entry name" value="PRK12928.1"/>
    <property type="match status" value="1"/>
</dbReference>
<dbReference type="PANTHER" id="PTHR10949">
    <property type="entry name" value="LIPOYL SYNTHASE"/>
    <property type="match status" value="1"/>
</dbReference>
<dbReference type="PANTHER" id="PTHR10949:SF0">
    <property type="entry name" value="LIPOYL SYNTHASE, MITOCHONDRIAL"/>
    <property type="match status" value="1"/>
</dbReference>
<dbReference type="Pfam" id="PF04055">
    <property type="entry name" value="Radical_SAM"/>
    <property type="match status" value="1"/>
</dbReference>
<dbReference type="PIRSF" id="PIRSF005963">
    <property type="entry name" value="Lipoyl_synth"/>
    <property type="match status" value="1"/>
</dbReference>
<dbReference type="SFLD" id="SFLDF00271">
    <property type="entry name" value="lipoyl_synthase"/>
    <property type="match status" value="1"/>
</dbReference>
<dbReference type="SFLD" id="SFLDS00029">
    <property type="entry name" value="Radical_SAM"/>
    <property type="match status" value="1"/>
</dbReference>
<dbReference type="SMART" id="SM00729">
    <property type="entry name" value="Elp3"/>
    <property type="match status" value="1"/>
</dbReference>
<dbReference type="SUPFAM" id="SSF102114">
    <property type="entry name" value="Radical SAM enzymes"/>
    <property type="match status" value="1"/>
</dbReference>
<dbReference type="PROSITE" id="PS51918">
    <property type="entry name" value="RADICAL_SAM"/>
    <property type="match status" value="1"/>
</dbReference>
<protein>
    <recommendedName>
        <fullName evidence="1">Lipoyl synthase</fullName>
        <ecNumber evidence="1">2.8.1.8</ecNumber>
    </recommendedName>
    <alternativeName>
        <fullName evidence="1">Lip-syn</fullName>
        <shortName evidence="1">LS</shortName>
    </alternativeName>
    <alternativeName>
        <fullName evidence="1">Lipoate synthase</fullName>
    </alternativeName>
    <alternativeName>
        <fullName evidence="1">Lipoic acid synthase</fullName>
    </alternativeName>
    <alternativeName>
        <fullName evidence="1">Sulfur insertion protein LipA</fullName>
    </alternativeName>
</protein>
<comment type="function">
    <text evidence="1">Catalyzes the radical-mediated insertion of two sulfur atoms into the C-6 and C-8 positions of the octanoyl moiety bound to the lipoyl domains of lipoate-dependent enzymes, thereby converting the octanoylated domains into lipoylated derivatives.</text>
</comment>
<comment type="catalytic activity">
    <reaction evidence="1">
        <text>[[Fe-S] cluster scaffold protein carrying a second [4Fe-4S](2+) cluster] + N(6)-octanoyl-L-lysyl-[protein] + 2 oxidized [2Fe-2S]-[ferredoxin] + 2 S-adenosyl-L-methionine + 4 H(+) = [[Fe-S] cluster scaffold protein] + N(6)-[(R)-dihydrolipoyl]-L-lysyl-[protein] + 4 Fe(3+) + 2 hydrogen sulfide + 2 5'-deoxyadenosine + 2 L-methionine + 2 reduced [2Fe-2S]-[ferredoxin]</text>
        <dbReference type="Rhea" id="RHEA:16585"/>
        <dbReference type="Rhea" id="RHEA-COMP:9928"/>
        <dbReference type="Rhea" id="RHEA-COMP:10000"/>
        <dbReference type="Rhea" id="RHEA-COMP:10001"/>
        <dbReference type="Rhea" id="RHEA-COMP:10475"/>
        <dbReference type="Rhea" id="RHEA-COMP:14568"/>
        <dbReference type="Rhea" id="RHEA-COMP:14569"/>
        <dbReference type="ChEBI" id="CHEBI:15378"/>
        <dbReference type="ChEBI" id="CHEBI:17319"/>
        <dbReference type="ChEBI" id="CHEBI:29034"/>
        <dbReference type="ChEBI" id="CHEBI:29919"/>
        <dbReference type="ChEBI" id="CHEBI:33722"/>
        <dbReference type="ChEBI" id="CHEBI:33737"/>
        <dbReference type="ChEBI" id="CHEBI:33738"/>
        <dbReference type="ChEBI" id="CHEBI:57844"/>
        <dbReference type="ChEBI" id="CHEBI:59789"/>
        <dbReference type="ChEBI" id="CHEBI:78809"/>
        <dbReference type="ChEBI" id="CHEBI:83100"/>
        <dbReference type="EC" id="2.8.1.8"/>
    </reaction>
</comment>
<comment type="cofactor">
    <cofactor evidence="1">
        <name>[4Fe-4S] cluster</name>
        <dbReference type="ChEBI" id="CHEBI:49883"/>
    </cofactor>
    <text evidence="1">Binds 2 [4Fe-4S] clusters per subunit. One cluster is coordinated with 3 cysteines and an exchangeable S-adenosyl-L-methionine.</text>
</comment>
<comment type="pathway">
    <text evidence="1">Protein modification; protein lipoylation via endogenous pathway; protein N(6)-(lipoyl)lysine from octanoyl-[acyl-carrier-protein]: step 2/2.</text>
</comment>
<comment type="subcellular location">
    <subcellularLocation>
        <location evidence="1">Cytoplasm</location>
    </subcellularLocation>
</comment>
<comment type="similarity">
    <text evidence="1">Belongs to the radical SAM superfamily. Lipoyl synthase family.</text>
</comment>
<evidence type="ECO:0000255" key="1">
    <source>
        <dbReference type="HAMAP-Rule" id="MF_00206"/>
    </source>
</evidence>
<evidence type="ECO:0000255" key="2">
    <source>
        <dbReference type="PROSITE-ProRule" id="PRU01266"/>
    </source>
</evidence>
<proteinExistence type="inferred from homology"/>
<feature type="chain" id="PRO_1000012280" description="Lipoyl synthase">
    <location>
        <begin position="1"/>
        <end position="321"/>
    </location>
</feature>
<feature type="domain" description="Radical SAM core" evidence="2">
    <location>
        <begin position="80"/>
        <end position="297"/>
    </location>
</feature>
<feature type="binding site" evidence="1">
    <location>
        <position position="68"/>
    </location>
    <ligand>
        <name>[4Fe-4S] cluster</name>
        <dbReference type="ChEBI" id="CHEBI:49883"/>
        <label>1</label>
    </ligand>
</feature>
<feature type="binding site" evidence="1">
    <location>
        <position position="73"/>
    </location>
    <ligand>
        <name>[4Fe-4S] cluster</name>
        <dbReference type="ChEBI" id="CHEBI:49883"/>
        <label>1</label>
    </ligand>
</feature>
<feature type="binding site" evidence="1">
    <location>
        <position position="79"/>
    </location>
    <ligand>
        <name>[4Fe-4S] cluster</name>
        <dbReference type="ChEBI" id="CHEBI:49883"/>
        <label>1</label>
    </ligand>
</feature>
<feature type="binding site" evidence="1">
    <location>
        <position position="94"/>
    </location>
    <ligand>
        <name>[4Fe-4S] cluster</name>
        <dbReference type="ChEBI" id="CHEBI:49883"/>
        <label>2</label>
        <note>4Fe-4S-S-AdoMet</note>
    </ligand>
</feature>
<feature type="binding site" evidence="1">
    <location>
        <position position="98"/>
    </location>
    <ligand>
        <name>[4Fe-4S] cluster</name>
        <dbReference type="ChEBI" id="CHEBI:49883"/>
        <label>2</label>
        <note>4Fe-4S-S-AdoMet</note>
    </ligand>
</feature>
<feature type="binding site" evidence="1">
    <location>
        <position position="101"/>
    </location>
    <ligand>
        <name>[4Fe-4S] cluster</name>
        <dbReference type="ChEBI" id="CHEBI:49883"/>
        <label>2</label>
        <note>4Fe-4S-S-AdoMet</note>
    </ligand>
</feature>
<feature type="binding site" evidence="1">
    <location>
        <position position="308"/>
    </location>
    <ligand>
        <name>[4Fe-4S] cluster</name>
        <dbReference type="ChEBI" id="CHEBI:49883"/>
        <label>1</label>
    </ligand>
</feature>
<reference key="1">
    <citation type="submission" date="2006-08" db="EMBL/GenBank/DDBJ databases">
        <title>Complete sequence of chromosome 1 of Shewanella sp. MR-7.</title>
        <authorList>
            <person name="Copeland A."/>
            <person name="Lucas S."/>
            <person name="Lapidus A."/>
            <person name="Barry K."/>
            <person name="Detter J.C."/>
            <person name="Glavina del Rio T."/>
            <person name="Hammon N."/>
            <person name="Israni S."/>
            <person name="Dalin E."/>
            <person name="Tice H."/>
            <person name="Pitluck S."/>
            <person name="Kiss H."/>
            <person name="Brettin T."/>
            <person name="Bruce D."/>
            <person name="Han C."/>
            <person name="Tapia R."/>
            <person name="Gilna P."/>
            <person name="Schmutz J."/>
            <person name="Larimer F."/>
            <person name="Land M."/>
            <person name="Hauser L."/>
            <person name="Kyrpides N."/>
            <person name="Mikhailova N."/>
            <person name="Nealson K."/>
            <person name="Konstantinidis K."/>
            <person name="Klappenbach J."/>
            <person name="Tiedje J."/>
            <person name="Richardson P."/>
        </authorList>
    </citation>
    <scope>NUCLEOTIDE SEQUENCE [LARGE SCALE GENOMIC DNA]</scope>
    <source>
        <strain>MR-7</strain>
    </source>
</reference>